<evidence type="ECO:0000255" key="1">
    <source>
        <dbReference type="HAMAP-Rule" id="MF_00503"/>
    </source>
</evidence>
<evidence type="ECO:0000305" key="2"/>
<name>RL9_FRAP2</name>
<gene>
    <name evidence="1" type="primary">rplI</name>
    <name type="ordered locus">Fphi_1686</name>
</gene>
<dbReference type="EMBL" id="CP000937">
    <property type="protein sequence ID" value="ABZ87911.1"/>
    <property type="molecule type" value="Genomic_DNA"/>
</dbReference>
<dbReference type="SMR" id="B0U081"/>
<dbReference type="KEGG" id="fph:Fphi_1686"/>
<dbReference type="eggNOG" id="COG0359">
    <property type="taxonomic scope" value="Bacteria"/>
</dbReference>
<dbReference type="HOGENOM" id="CLU_078938_4_1_6"/>
<dbReference type="GO" id="GO:1990904">
    <property type="term" value="C:ribonucleoprotein complex"/>
    <property type="evidence" value="ECO:0007669"/>
    <property type="project" value="UniProtKB-KW"/>
</dbReference>
<dbReference type="GO" id="GO:0005840">
    <property type="term" value="C:ribosome"/>
    <property type="evidence" value="ECO:0007669"/>
    <property type="project" value="UniProtKB-KW"/>
</dbReference>
<dbReference type="GO" id="GO:0019843">
    <property type="term" value="F:rRNA binding"/>
    <property type="evidence" value="ECO:0007669"/>
    <property type="project" value="UniProtKB-UniRule"/>
</dbReference>
<dbReference type="GO" id="GO:0003735">
    <property type="term" value="F:structural constituent of ribosome"/>
    <property type="evidence" value="ECO:0007669"/>
    <property type="project" value="InterPro"/>
</dbReference>
<dbReference type="GO" id="GO:0006412">
    <property type="term" value="P:translation"/>
    <property type="evidence" value="ECO:0007669"/>
    <property type="project" value="UniProtKB-UniRule"/>
</dbReference>
<dbReference type="Gene3D" id="3.10.430.100">
    <property type="entry name" value="Ribosomal protein L9, C-terminal domain"/>
    <property type="match status" value="1"/>
</dbReference>
<dbReference type="Gene3D" id="3.40.5.10">
    <property type="entry name" value="Ribosomal protein L9, N-terminal domain"/>
    <property type="match status" value="1"/>
</dbReference>
<dbReference type="HAMAP" id="MF_00503">
    <property type="entry name" value="Ribosomal_bL9"/>
    <property type="match status" value="1"/>
</dbReference>
<dbReference type="InterPro" id="IPR000244">
    <property type="entry name" value="Ribosomal_bL9"/>
</dbReference>
<dbReference type="InterPro" id="IPR009027">
    <property type="entry name" value="Ribosomal_bL9/RNase_H1_N"/>
</dbReference>
<dbReference type="InterPro" id="IPR020594">
    <property type="entry name" value="Ribosomal_bL9_bac/chp"/>
</dbReference>
<dbReference type="InterPro" id="IPR020069">
    <property type="entry name" value="Ribosomal_bL9_C"/>
</dbReference>
<dbReference type="InterPro" id="IPR036791">
    <property type="entry name" value="Ribosomal_bL9_C_sf"/>
</dbReference>
<dbReference type="InterPro" id="IPR020070">
    <property type="entry name" value="Ribosomal_bL9_N"/>
</dbReference>
<dbReference type="InterPro" id="IPR036935">
    <property type="entry name" value="Ribosomal_bL9_N_sf"/>
</dbReference>
<dbReference type="NCBIfam" id="TIGR00158">
    <property type="entry name" value="L9"/>
    <property type="match status" value="1"/>
</dbReference>
<dbReference type="PANTHER" id="PTHR21368">
    <property type="entry name" value="50S RIBOSOMAL PROTEIN L9"/>
    <property type="match status" value="1"/>
</dbReference>
<dbReference type="Pfam" id="PF03948">
    <property type="entry name" value="Ribosomal_L9_C"/>
    <property type="match status" value="1"/>
</dbReference>
<dbReference type="Pfam" id="PF01281">
    <property type="entry name" value="Ribosomal_L9_N"/>
    <property type="match status" value="1"/>
</dbReference>
<dbReference type="SUPFAM" id="SSF55658">
    <property type="entry name" value="L9 N-domain-like"/>
    <property type="match status" value="1"/>
</dbReference>
<dbReference type="SUPFAM" id="SSF55653">
    <property type="entry name" value="Ribosomal protein L9 C-domain"/>
    <property type="match status" value="1"/>
</dbReference>
<dbReference type="PROSITE" id="PS00651">
    <property type="entry name" value="RIBOSOMAL_L9"/>
    <property type="match status" value="1"/>
</dbReference>
<sequence length="151" mass="16096">MQVILKEKVENLGVLGDIVNVKPGYARNFLIPFGKAVQATKANIETFEAQKAELEKAEKARFDAAVATAEAIKDKVYTIAAQAGEGGKLFGSVGTAEVAEAVSQASGKEIEKSQVRMPEGVIRSIGEFELTIHVYTDVDADIKVNVVASEA</sequence>
<reference key="1">
    <citation type="submission" date="2007-12" db="EMBL/GenBank/DDBJ databases">
        <title>Complete sequence of chromosome of Francisella philomiragia subsp. philomiragia ATCC 25017.</title>
        <authorList>
            <consortium name="US DOE Joint Genome Institute"/>
            <person name="Copeland A."/>
            <person name="Lucas S."/>
            <person name="Lapidus A."/>
            <person name="Barry K."/>
            <person name="Detter J.C."/>
            <person name="Glavina del Rio T."/>
            <person name="Hammon N."/>
            <person name="Israni S."/>
            <person name="Dalin E."/>
            <person name="Tice H."/>
            <person name="Pitluck S."/>
            <person name="Chain P."/>
            <person name="Malfatti S."/>
            <person name="Shin M."/>
            <person name="Vergez L."/>
            <person name="Schmutz J."/>
            <person name="Larimer F."/>
            <person name="Land M."/>
            <person name="Hauser L."/>
            <person name="Richardson P."/>
        </authorList>
    </citation>
    <scope>NUCLEOTIDE SEQUENCE [LARGE SCALE GENOMIC DNA]</scope>
    <source>
        <strain>ATCC 25017 / CCUG 19701 / FSC 153 / O#319-036</strain>
    </source>
</reference>
<protein>
    <recommendedName>
        <fullName evidence="1">Large ribosomal subunit protein bL9</fullName>
    </recommendedName>
    <alternativeName>
        <fullName evidence="2">50S ribosomal protein L9</fullName>
    </alternativeName>
</protein>
<comment type="function">
    <text evidence="1">Binds to the 23S rRNA.</text>
</comment>
<comment type="similarity">
    <text evidence="1">Belongs to the bacterial ribosomal protein bL9 family.</text>
</comment>
<keyword id="KW-0687">Ribonucleoprotein</keyword>
<keyword id="KW-0689">Ribosomal protein</keyword>
<keyword id="KW-0694">RNA-binding</keyword>
<keyword id="KW-0699">rRNA-binding</keyword>
<organism>
    <name type="scientific">Francisella philomiragia subsp. philomiragia (strain ATCC 25017 / CCUG 19701 / FSC 153 / O#319-036)</name>
    <dbReference type="NCBI Taxonomy" id="484022"/>
    <lineage>
        <taxon>Bacteria</taxon>
        <taxon>Pseudomonadati</taxon>
        <taxon>Pseudomonadota</taxon>
        <taxon>Gammaproteobacteria</taxon>
        <taxon>Thiotrichales</taxon>
        <taxon>Francisellaceae</taxon>
        <taxon>Francisella</taxon>
    </lineage>
</organism>
<proteinExistence type="inferred from homology"/>
<accession>B0U081</accession>
<feature type="chain" id="PRO_1000081480" description="Large ribosomal subunit protein bL9">
    <location>
        <begin position="1"/>
        <end position="151"/>
    </location>
</feature>